<sequence length="456" mass="49220">MLNNAMSVVILAAGKGTRMYSDLPKVLHTLAGKAMVQHVIDAANELGAAHVHLVYGHGGDLLKQALKDDNLNWVLQTEQLGTGHAMQQAAPFFADDEDILMLYGDVPLISVETLQRLRDAKPQGGIGLLTVKLDDPTGYGRITRENGKVTGIVEHKDATDEQRQIQEINTGILIANGADMKRWLAKLTNNNAQGEYYITDIIALAYQEGREIVAVHPQRLSEVEGVNNRLQLSRLERVYQSEQAEKLLLAGVMLRDPARFDLRGTLTHGRDVEIDTNVIIEGNVTLGHRVKIGTGCVIKNSVIGDDCEISPYTVVEDANLAAACTIGPFARLRPGAELLEGAHVGNFVEMKKARLGKGSKAGHLTYLGDAEIGDNVNIGAGTITCNYDGANKFKTIIGDDVFVGSDTQLVAPVTVGKGATIAAGTTVTRNVGENALAISRVPQTQKEGWRRPVKKK</sequence>
<reference key="1">
    <citation type="journal article" date="2007" name="J. Bacteriol.">
        <title>The genome sequence of avian pathogenic Escherichia coli strain O1:K1:H7 shares strong similarities with human extraintestinal pathogenic E. coli genomes.</title>
        <authorList>
            <person name="Johnson T.J."/>
            <person name="Kariyawasam S."/>
            <person name="Wannemuehler Y."/>
            <person name="Mangiamele P."/>
            <person name="Johnson S.J."/>
            <person name="Doetkott C."/>
            <person name="Skyberg J.A."/>
            <person name="Lynne A.M."/>
            <person name="Johnson J.R."/>
            <person name="Nolan L.K."/>
        </authorList>
    </citation>
    <scope>NUCLEOTIDE SEQUENCE [LARGE SCALE GENOMIC DNA]</scope>
</reference>
<evidence type="ECO:0000255" key="1">
    <source>
        <dbReference type="HAMAP-Rule" id="MF_01631"/>
    </source>
</evidence>
<protein>
    <recommendedName>
        <fullName evidence="1">Bifunctional protein GlmU</fullName>
    </recommendedName>
    <domain>
        <recommendedName>
            <fullName evidence="1">UDP-N-acetylglucosamine pyrophosphorylase</fullName>
            <ecNumber evidence="1">2.7.7.23</ecNumber>
        </recommendedName>
        <alternativeName>
            <fullName evidence="1">N-acetylglucosamine-1-phosphate uridyltransferase</fullName>
        </alternativeName>
    </domain>
    <domain>
        <recommendedName>
            <fullName evidence="1">Glucosamine-1-phosphate N-acetyltransferase</fullName>
            <ecNumber evidence="1">2.3.1.157</ecNumber>
        </recommendedName>
    </domain>
</protein>
<name>GLMU_ECOK1</name>
<feature type="chain" id="PRO_1000056155" description="Bifunctional protein GlmU">
    <location>
        <begin position="1"/>
        <end position="456"/>
    </location>
</feature>
<feature type="region of interest" description="Pyrophosphorylase" evidence="1">
    <location>
        <begin position="1"/>
        <end position="229"/>
    </location>
</feature>
<feature type="region of interest" description="Linker" evidence="1">
    <location>
        <begin position="230"/>
        <end position="250"/>
    </location>
</feature>
<feature type="region of interest" description="N-acetyltransferase" evidence="1">
    <location>
        <begin position="251"/>
        <end position="456"/>
    </location>
</feature>
<feature type="active site" description="Proton acceptor" evidence="1">
    <location>
        <position position="363"/>
    </location>
</feature>
<feature type="binding site" evidence="1">
    <location>
        <begin position="11"/>
        <end position="14"/>
    </location>
    <ligand>
        <name>UDP-N-acetyl-alpha-D-glucosamine</name>
        <dbReference type="ChEBI" id="CHEBI:57705"/>
    </ligand>
</feature>
<feature type="binding site" evidence="1">
    <location>
        <position position="25"/>
    </location>
    <ligand>
        <name>UDP-N-acetyl-alpha-D-glucosamine</name>
        <dbReference type="ChEBI" id="CHEBI:57705"/>
    </ligand>
</feature>
<feature type="binding site" evidence="1">
    <location>
        <position position="76"/>
    </location>
    <ligand>
        <name>UDP-N-acetyl-alpha-D-glucosamine</name>
        <dbReference type="ChEBI" id="CHEBI:57705"/>
    </ligand>
</feature>
<feature type="binding site" evidence="1">
    <location>
        <begin position="81"/>
        <end position="82"/>
    </location>
    <ligand>
        <name>UDP-N-acetyl-alpha-D-glucosamine</name>
        <dbReference type="ChEBI" id="CHEBI:57705"/>
    </ligand>
</feature>
<feature type="binding site" evidence="1">
    <location>
        <begin position="103"/>
        <end position="105"/>
    </location>
    <ligand>
        <name>UDP-N-acetyl-alpha-D-glucosamine</name>
        <dbReference type="ChEBI" id="CHEBI:57705"/>
    </ligand>
</feature>
<feature type="binding site" evidence="1">
    <location>
        <position position="105"/>
    </location>
    <ligand>
        <name>Mg(2+)</name>
        <dbReference type="ChEBI" id="CHEBI:18420"/>
    </ligand>
</feature>
<feature type="binding site" evidence="1">
    <location>
        <position position="140"/>
    </location>
    <ligand>
        <name>UDP-N-acetyl-alpha-D-glucosamine</name>
        <dbReference type="ChEBI" id="CHEBI:57705"/>
    </ligand>
</feature>
<feature type="binding site" evidence="1">
    <location>
        <position position="154"/>
    </location>
    <ligand>
        <name>UDP-N-acetyl-alpha-D-glucosamine</name>
        <dbReference type="ChEBI" id="CHEBI:57705"/>
    </ligand>
</feature>
<feature type="binding site" evidence="1">
    <location>
        <position position="169"/>
    </location>
    <ligand>
        <name>UDP-N-acetyl-alpha-D-glucosamine</name>
        <dbReference type="ChEBI" id="CHEBI:57705"/>
    </ligand>
</feature>
<feature type="binding site" evidence="1">
    <location>
        <position position="227"/>
    </location>
    <ligand>
        <name>Mg(2+)</name>
        <dbReference type="ChEBI" id="CHEBI:18420"/>
    </ligand>
</feature>
<feature type="binding site" evidence="1">
    <location>
        <position position="227"/>
    </location>
    <ligand>
        <name>UDP-N-acetyl-alpha-D-glucosamine</name>
        <dbReference type="ChEBI" id="CHEBI:57705"/>
    </ligand>
</feature>
<feature type="binding site" evidence="1">
    <location>
        <position position="333"/>
    </location>
    <ligand>
        <name>UDP-N-acetyl-alpha-D-glucosamine</name>
        <dbReference type="ChEBI" id="CHEBI:57705"/>
    </ligand>
</feature>
<feature type="binding site" evidence="1">
    <location>
        <position position="351"/>
    </location>
    <ligand>
        <name>UDP-N-acetyl-alpha-D-glucosamine</name>
        <dbReference type="ChEBI" id="CHEBI:57705"/>
    </ligand>
</feature>
<feature type="binding site" evidence="1">
    <location>
        <position position="366"/>
    </location>
    <ligand>
        <name>UDP-N-acetyl-alpha-D-glucosamine</name>
        <dbReference type="ChEBI" id="CHEBI:57705"/>
    </ligand>
</feature>
<feature type="binding site" evidence="1">
    <location>
        <position position="377"/>
    </location>
    <ligand>
        <name>UDP-N-acetyl-alpha-D-glucosamine</name>
        <dbReference type="ChEBI" id="CHEBI:57705"/>
    </ligand>
</feature>
<feature type="binding site" evidence="1">
    <location>
        <position position="380"/>
    </location>
    <ligand>
        <name>acetyl-CoA</name>
        <dbReference type="ChEBI" id="CHEBI:57288"/>
    </ligand>
</feature>
<feature type="binding site" evidence="1">
    <location>
        <begin position="386"/>
        <end position="387"/>
    </location>
    <ligand>
        <name>acetyl-CoA</name>
        <dbReference type="ChEBI" id="CHEBI:57288"/>
    </ligand>
</feature>
<feature type="binding site" evidence="1">
    <location>
        <position position="405"/>
    </location>
    <ligand>
        <name>acetyl-CoA</name>
        <dbReference type="ChEBI" id="CHEBI:57288"/>
    </ligand>
</feature>
<feature type="binding site" evidence="1">
    <location>
        <position position="423"/>
    </location>
    <ligand>
        <name>acetyl-CoA</name>
        <dbReference type="ChEBI" id="CHEBI:57288"/>
    </ligand>
</feature>
<feature type="binding site" evidence="1">
    <location>
        <position position="440"/>
    </location>
    <ligand>
        <name>acetyl-CoA</name>
        <dbReference type="ChEBI" id="CHEBI:57288"/>
    </ligand>
</feature>
<comment type="function">
    <text evidence="1">Catalyzes the last two sequential reactions in the de novo biosynthetic pathway for UDP-N-acetylglucosamine (UDP-GlcNAc). The C-terminal domain catalyzes the transfer of acetyl group from acetyl coenzyme A to glucosamine-1-phosphate (GlcN-1-P) to produce N-acetylglucosamine-1-phosphate (GlcNAc-1-P), which is converted into UDP-GlcNAc by the transfer of uridine 5-monophosphate (from uridine 5-triphosphate), a reaction catalyzed by the N-terminal domain.</text>
</comment>
<comment type="catalytic activity">
    <reaction evidence="1">
        <text>alpha-D-glucosamine 1-phosphate + acetyl-CoA = N-acetyl-alpha-D-glucosamine 1-phosphate + CoA + H(+)</text>
        <dbReference type="Rhea" id="RHEA:13725"/>
        <dbReference type="ChEBI" id="CHEBI:15378"/>
        <dbReference type="ChEBI" id="CHEBI:57287"/>
        <dbReference type="ChEBI" id="CHEBI:57288"/>
        <dbReference type="ChEBI" id="CHEBI:57776"/>
        <dbReference type="ChEBI" id="CHEBI:58516"/>
        <dbReference type="EC" id="2.3.1.157"/>
    </reaction>
</comment>
<comment type="catalytic activity">
    <reaction evidence="1">
        <text>N-acetyl-alpha-D-glucosamine 1-phosphate + UTP + H(+) = UDP-N-acetyl-alpha-D-glucosamine + diphosphate</text>
        <dbReference type="Rhea" id="RHEA:13509"/>
        <dbReference type="ChEBI" id="CHEBI:15378"/>
        <dbReference type="ChEBI" id="CHEBI:33019"/>
        <dbReference type="ChEBI" id="CHEBI:46398"/>
        <dbReference type="ChEBI" id="CHEBI:57705"/>
        <dbReference type="ChEBI" id="CHEBI:57776"/>
        <dbReference type="EC" id="2.7.7.23"/>
    </reaction>
</comment>
<comment type="cofactor">
    <cofactor evidence="1">
        <name>Mg(2+)</name>
        <dbReference type="ChEBI" id="CHEBI:18420"/>
    </cofactor>
    <text evidence="1">Binds 1 Mg(2+) ion per subunit.</text>
</comment>
<comment type="pathway">
    <text evidence="1">Nucleotide-sugar biosynthesis; UDP-N-acetyl-alpha-D-glucosamine biosynthesis; N-acetyl-alpha-D-glucosamine 1-phosphate from alpha-D-glucosamine 6-phosphate (route II): step 2/2.</text>
</comment>
<comment type="pathway">
    <text evidence="1">Nucleotide-sugar biosynthesis; UDP-N-acetyl-alpha-D-glucosamine biosynthesis; UDP-N-acetyl-alpha-D-glucosamine from N-acetyl-alpha-D-glucosamine 1-phosphate: step 1/1.</text>
</comment>
<comment type="pathway">
    <text evidence="1">Bacterial outer membrane biogenesis; LPS lipid A biosynthesis.</text>
</comment>
<comment type="subunit">
    <text evidence="1">Homotrimer.</text>
</comment>
<comment type="subcellular location">
    <subcellularLocation>
        <location evidence="1">Cytoplasm</location>
    </subcellularLocation>
</comment>
<comment type="similarity">
    <text evidence="1">In the N-terminal section; belongs to the N-acetylglucosamine-1-phosphate uridyltransferase family.</text>
</comment>
<comment type="similarity">
    <text evidence="1">In the C-terminal section; belongs to the transferase hexapeptide repeat family.</text>
</comment>
<proteinExistence type="inferred from homology"/>
<keyword id="KW-0012">Acyltransferase</keyword>
<keyword id="KW-0133">Cell shape</keyword>
<keyword id="KW-0961">Cell wall biogenesis/degradation</keyword>
<keyword id="KW-0963">Cytoplasm</keyword>
<keyword id="KW-0460">Magnesium</keyword>
<keyword id="KW-0479">Metal-binding</keyword>
<keyword id="KW-0511">Multifunctional enzyme</keyword>
<keyword id="KW-0548">Nucleotidyltransferase</keyword>
<keyword id="KW-0573">Peptidoglycan synthesis</keyword>
<keyword id="KW-1185">Reference proteome</keyword>
<keyword id="KW-0677">Repeat</keyword>
<keyword id="KW-0808">Transferase</keyword>
<dbReference type="EC" id="2.7.7.23" evidence="1"/>
<dbReference type="EC" id="2.3.1.157" evidence="1"/>
<dbReference type="EMBL" id="CP000468">
    <property type="protein sequence ID" value="ABJ03202.1"/>
    <property type="molecule type" value="Genomic_DNA"/>
</dbReference>
<dbReference type="RefSeq" id="WP_000933754.1">
    <property type="nucleotide sequence ID" value="NZ_CADILS010000011.1"/>
</dbReference>
<dbReference type="SMR" id="A1AHR2"/>
<dbReference type="KEGG" id="ecv:APECO1_2731"/>
<dbReference type="HOGENOM" id="CLU_029499_15_2_6"/>
<dbReference type="UniPathway" id="UPA00113">
    <property type="reaction ID" value="UER00532"/>
</dbReference>
<dbReference type="UniPathway" id="UPA00113">
    <property type="reaction ID" value="UER00533"/>
</dbReference>
<dbReference type="UniPathway" id="UPA00973"/>
<dbReference type="Proteomes" id="UP000008216">
    <property type="component" value="Chromosome"/>
</dbReference>
<dbReference type="GO" id="GO:0005737">
    <property type="term" value="C:cytoplasm"/>
    <property type="evidence" value="ECO:0007669"/>
    <property type="project" value="UniProtKB-SubCell"/>
</dbReference>
<dbReference type="GO" id="GO:0016020">
    <property type="term" value="C:membrane"/>
    <property type="evidence" value="ECO:0007669"/>
    <property type="project" value="GOC"/>
</dbReference>
<dbReference type="GO" id="GO:0019134">
    <property type="term" value="F:glucosamine-1-phosphate N-acetyltransferase activity"/>
    <property type="evidence" value="ECO:0007669"/>
    <property type="project" value="UniProtKB-UniRule"/>
</dbReference>
<dbReference type="GO" id="GO:0000287">
    <property type="term" value="F:magnesium ion binding"/>
    <property type="evidence" value="ECO:0007669"/>
    <property type="project" value="UniProtKB-UniRule"/>
</dbReference>
<dbReference type="GO" id="GO:0003977">
    <property type="term" value="F:UDP-N-acetylglucosamine diphosphorylase activity"/>
    <property type="evidence" value="ECO:0007669"/>
    <property type="project" value="UniProtKB-UniRule"/>
</dbReference>
<dbReference type="GO" id="GO:0000902">
    <property type="term" value="P:cell morphogenesis"/>
    <property type="evidence" value="ECO:0007669"/>
    <property type="project" value="UniProtKB-UniRule"/>
</dbReference>
<dbReference type="GO" id="GO:0071555">
    <property type="term" value="P:cell wall organization"/>
    <property type="evidence" value="ECO:0007669"/>
    <property type="project" value="UniProtKB-KW"/>
</dbReference>
<dbReference type="GO" id="GO:0009245">
    <property type="term" value="P:lipid A biosynthetic process"/>
    <property type="evidence" value="ECO:0007669"/>
    <property type="project" value="UniProtKB-UniRule"/>
</dbReference>
<dbReference type="GO" id="GO:0009252">
    <property type="term" value="P:peptidoglycan biosynthetic process"/>
    <property type="evidence" value="ECO:0007669"/>
    <property type="project" value="UniProtKB-UniRule"/>
</dbReference>
<dbReference type="GO" id="GO:0008360">
    <property type="term" value="P:regulation of cell shape"/>
    <property type="evidence" value="ECO:0007669"/>
    <property type="project" value="UniProtKB-KW"/>
</dbReference>
<dbReference type="GO" id="GO:0006048">
    <property type="term" value="P:UDP-N-acetylglucosamine biosynthetic process"/>
    <property type="evidence" value="ECO:0007669"/>
    <property type="project" value="UniProtKB-UniPathway"/>
</dbReference>
<dbReference type="CDD" id="cd02540">
    <property type="entry name" value="GT2_GlmU_N_bac"/>
    <property type="match status" value="1"/>
</dbReference>
<dbReference type="CDD" id="cd03353">
    <property type="entry name" value="LbH_GlmU_C"/>
    <property type="match status" value="1"/>
</dbReference>
<dbReference type="FunFam" id="2.160.10.10:FF:000011">
    <property type="entry name" value="Bifunctional protein GlmU"/>
    <property type="match status" value="1"/>
</dbReference>
<dbReference type="FunFam" id="3.90.550.10:FF:000006">
    <property type="entry name" value="Bifunctional protein GlmU"/>
    <property type="match status" value="1"/>
</dbReference>
<dbReference type="Gene3D" id="2.160.10.10">
    <property type="entry name" value="Hexapeptide repeat proteins"/>
    <property type="match status" value="1"/>
</dbReference>
<dbReference type="Gene3D" id="3.90.550.10">
    <property type="entry name" value="Spore Coat Polysaccharide Biosynthesis Protein SpsA, Chain A"/>
    <property type="match status" value="1"/>
</dbReference>
<dbReference type="HAMAP" id="MF_01631">
    <property type="entry name" value="GlmU"/>
    <property type="match status" value="1"/>
</dbReference>
<dbReference type="InterPro" id="IPR005882">
    <property type="entry name" value="Bifunctional_GlmU"/>
</dbReference>
<dbReference type="InterPro" id="IPR050065">
    <property type="entry name" value="GlmU-like"/>
</dbReference>
<dbReference type="InterPro" id="IPR038009">
    <property type="entry name" value="GlmU_C_LbH"/>
</dbReference>
<dbReference type="InterPro" id="IPR001451">
    <property type="entry name" value="Hexapep"/>
</dbReference>
<dbReference type="InterPro" id="IPR018357">
    <property type="entry name" value="Hexapep_transf_CS"/>
</dbReference>
<dbReference type="InterPro" id="IPR025877">
    <property type="entry name" value="MobA-like_NTP_Trfase"/>
</dbReference>
<dbReference type="InterPro" id="IPR029044">
    <property type="entry name" value="Nucleotide-diphossugar_trans"/>
</dbReference>
<dbReference type="InterPro" id="IPR011004">
    <property type="entry name" value="Trimer_LpxA-like_sf"/>
</dbReference>
<dbReference type="NCBIfam" id="TIGR01173">
    <property type="entry name" value="glmU"/>
    <property type="match status" value="1"/>
</dbReference>
<dbReference type="NCBIfam" id="NF006986">
    <property type="entry name" value="PRK09451.1"/>
    <property type="match status" value="1"/>
</dbReference>
<dbReference type="PANTHER" id="PTHR43584:SF3">
    <property type="entry name" value="BIFUNCTIONAL PROTEIN GLMU"/>
    <property type="match status" value="1"/>
</dbReference>
<dbReference type="PANTHER" id="PTHR43584">
    <property type="entry name" value="NUCLEOTIDYL TRANSFERASE"/>
    <property type="match status" value="1"/>
</dbReference>
<dbReference type="Pfam" id="PF00132">
    <property type="entry name" value="Hexapep"/>
    <property type="match status" value="1"/>
</dbReference>
<dbReference type="Pfam" id="PF12804">
    <property type="entry name" value="NTP_transf_3"/>
    <property type="match status" value="1"/>
</dbReference>
<dbReference type="SUPFAM" id="SSF53448">
    <property type="entry name" value="Nucleotide-diphospho-sugar transferases"/>
    <property type="match status" value="1"/>
</dbReference>
<dbReference type="SUPFAM" id="SSF51161">
    <property type="entry name" value="Trimeric LpxA-like enzymes"/>
    <property type="match status" value="1"/>
</dbReference>
<dbReference type="PROSITE" id="PS00101">
    <property type="entry name" value="HEXAPEP_TRANSFERASES"/>
    <property type="match status" value="1"/>
</dbReference>
<organism>
    <name type="scientific">Escherichia coli O1:K1 / APEC</name>
    <dbReference type="NCBI Taxonomy" id="405955"/>
    <lineage>
        <taxon>Bacteria</taxon>
        <taxon>Pseudomonadati</taxon>
        <taxon>Pseudomonadota</taxon>
        <taxon>Gammaproteobacteria</taxon>
        <taxon>Enterobacterales</taxon>
        <taxon>Enterobacteriaceae</taxon>
        <taxon>Escherichia</taxon>
    </lineage>
</organism>
<gene>
    <name evidence="1" type="primary">glmU</name>
    <name type="ordered locus">Ecok1_37080</name>
    <name type="ORF">APECO1_2731</name>
</gene>
<accession>A1AHR2</accession>